<reference key="1">
    <citation type="journal article" date="2009" name="Appl. Environ. Microbiol.">
        <title>Novel features of the polysaccharide-digesting gliding bacterium Flavobacterium johnsoniae as revealed by genome sequence analysis.</title>
        <authorList>
            <person name="McBride M.J."/>
            <person name="Xie G."/>
            <person name="Martens E.C."/>
            <person name="Lapidus A."/>
            <person name="Henrissat B."/>
            <person name="Rhodes R.G."/>
            <person name="Goltsman E."/>
            <person name="Wang W."/>
            <person name="Xu J."/>
            <person name="Hunnicutt D.W."/>
            <person name="Staroscik A.M."/>
            <person name="Hoover T.R."/>
            <person name="Cheng Y.Q."/>
            <person name="Stein J.L."/>
        </authorList>
    </citation>
    <scope>NUCLEOTIDE SEQUENCE [LARGE SCALE GENOMIC DNA]</scope>
    <source>
        <strain>ATCC 17061 / DSM 2064 / JCM 8514 / BCRC 14874 / CCUG 350202 / NBRC 14942 / NCIMB 11054 / UW101</strain>
    </source>
</reference>
<dbReference type="EMBL" id="CP000685">
    <property type="protein sequence ID" value="ABQ03427.1"/>
    <property type="molecule type" value="Genomic_DNA"/>
</dbReference>
<dbReference type="RefSeq" id="WP_012022487.1">
    <property type="nucleotide sequence ID" value="NZ_MUGZ01000005.1"/>
</dbReference>
<dbReference type="SMR" id="A5FMZ4"/>
<dbReference type="STRING" id="376686.Fjoh_0391"/>
<dbReference type="KEGG" id="fjo:Fjoh_0391"/>
<dbReference type="eggNOG" id="COG0092">
    <property type="taxonomic scope" value="Bacteria"/>
</dbReference>
<dbReference type="HOGENOM" id="CLU_058591_0_2_10"/>
<dbReference type="OrthoDB" id="9806396at2"/>
<dbReference type="Proteomes" id="UP000006694">
    <property type="component" value="Chromosome"/>
</dbReference>
<dbReference type="GO" id="GO:0022627">
    <property type="term" value="C:cytosolic small ribosomal subunit"/>
    <property type="evidence" value="ECO:0007669"/>
    <property type="project" value="TreeGrafter"/>
</dbReference>
<dbReference type="GO" id="GO:0003729">
    <property type="term" value="F:mRNA binding"/>
    <property type="evidence" value="ECO:0007669"/>
    <property type="project" value="UniProtKB-UniRule"/>
</dbReference>
<dbReference type="GO" id="GO:0019843">
    <property type="term" value="F:rRNA binding"/>
    <property type="evidence" value="ECO:0007669"/>
    <property type="project" value="UniProtKB-UniRule"/>
</dbReference>
<dbReference type="GO" id="GO:0003735">
    <property type="term" value="F:structural constituent of ribosome"/>
    <property type="evidence" value="ECO:0007669"/>
    <property type="project" value="InterPro"/>
</dbReference>
<dbReference type="GO" id="GO:0006412">
    <property type="term" value="P:translation"/>
    <property type="evidence" value="ECO:0007669"/>
    <property type="project" value="UniProtKB-UniRule"/>
</dbReference>
<dbReference type="CDD" id="cd02412">
    <property type="entry name" value="KH-II_30S_S3"/>
    <property type="match status" value="1"/>
</dbReference>
<dbReference type="FunFam" id="3.30.300.20:FF:000001">
    <property type="entry name" value="30S ribosomal protein S3"/>
    <property type="match status" value="1"/>
</dbReference>
<dbReference type="Gene3D" id="3.30.300.20">
    <property type="match status" value="1"/>
</dbReference>
<dbReference type="Gene3D" id="3.30.1140.32">
    <property type="entry name" value="Ribosomal protein S3, C-terminal domain"/>
    <property type="match status" value="1"/>
</dbReference>
<dbReference type="HAMAP" id="MF_01309_B">
    <property type="entry name" value="Ribosomal_uS3_B"/>
    <property type="match status" value="1"/>
</dbReference>
<dbReference type="InterPro" id="IPR004087">
    <property type="entry name" value="KH_dom"/>
</dbReference>
<dbReference type="InterPro" id="IPR015946">
    <property type="entry name" value="KH_dom-like_a/b"/>
</dbReference>
<dbReference type="InterPro" id="IPR004044">
    <property type="entry name" value="KH_dom_type_2"/>
</dbReference>
<dbReference type="InterPro" id="IPR009019">
    <property type="entry name" value="KH_sf_prok-type"/>
</dbReference>
<dbReference type="InterPro" id="IPR036419">
    <property type="entry name" value="Ribosomal_S3_C_sf"/>
</dbReference>
<dbReference type="InterPro" id="IPR005704">
    <property type="entry name" value="Ribosomal_uS3_bac-typ"/>
</dbReference>
<dbReference type="InterPro" id="IPR001351">
    <property type="entry name" value="Ribosomal_uS3_C"/>
</dbReference>
<dbReference type="InterPro" id="IPR018280">
    <property type="entry name" value="Ribosomal_uS3_CS"/>
</dbReference>
<dbReference type="NCBIfam" id="TIGR01009">
    <property type="entry name" value="rpsC_bact"/>
    <property type="match status" value="1"/>
</dbReference>
<dbReference type="PANTHER" id="PTHR11760">
    <property type="entry name" value="30S/40S RIBOSOMAL PROTEIN S3"/>
    <property type="match status" value="1"/>
</dbReference>
<dbReference type="PANTHER" id="PTHR11760:SF19">
    <property type="entry name" value="SMALL RIBOSOMAL SUBUNIT PROTEIN US3C"/>
    <property type="match status" value="1"/>
</dbReference>
<dbReference type="Pfam" id="PF07650">
    <property type="entry name" value="KH_2"/>
    <property type="match status" value="1"/>
</dbReference>
<dbReference type="Pfam" id="PF00189">
    <property type="entry name" value="Ribosomal_S3_C"/>
    <property type="match status" value="1"/>
</dbReference>
<dbReference type="SMART" id="SM00322">
    <property type="entry name" value="KH"/>
    <property type="match status" value="1"/>
</dbReference>
<dbReference type="SUPFAM" id="SSF54814">
    <property type="entry name" value="Prokaryotic type KH domain (KH-domain type II)"/>
    <property type="match status" value="1"/>
</dbReference>
<dbReference type="SUPFAM" id="SSF54821">
    <property type="entry name" value="Ribosomal protein S3 C-terminal domain"/>
    <property type="match status" value="1"/>
</dbReference>
<dbReference type="PROSITE" id="PS50823">
    <property type="entry name" value="KH_TYPE_2"/>
    <property type="match status" value="1"/>
</dbReference>
<dbReference type="PROSITE" id="PS00548">
    <property type="entry name" value="RIBOSOMAL_S3"/>
    <property type="match status" value="1"/>
</dbReference>
<sequence>MGQKTNPIGNRLGIIRGWDSNWYGGNDYGDKLAEDHKIRKYIHARLSKASVSKVIIERTLKLVTVTITTARPGIIIGKGGQEVDKLKEELKKVTDKEVQINIFEIKRPELDAYLVATSIARQIESRISYRRAIKMAIAASMRMNAEGIKVLISGRLNGAEMARSEGFKEGRIPLSTFRADIDYALAEAHTTYGRMGIKVWIMKGEVYGKRDLSPLAGMDKKQSGTGGGKGGDAPRGKSNFNKGGKPDARKRK</sequence>
<name>RS3_FLAJ1</name>
<evidence type="ECO:0000255" key="1">
    <source>
        <dbReference type="HAMAP-Rule" id="MF_01309"/>
    </source>
</evidence>
<evidence type="ECO:0000256" key="2">
    <source>
        <dbReference type="SAM" id="MobiDB-lite"/>
    </source>
</evidence>
<evidence type="ECO:0000305" key="3"/>
<keyword id="KW-0687">Ribonucleoprotein</keyword>
<keyword id="KW-0689">Ribosomal protein</keyword>
<keyword id="KW-0694">RNA-binding</keyword>
<keyword id="KW-0699">rRNA-binding</keyword>
<comment type="function">
    <text evidence="1">Binds the lower part of the 30S subunit head. Binds mRNA in the 70S ribosome, positioning it for translation.</text>
</comment>
<comment type="subunit">
    <text evidence="1">Part of the 30S ribosomal subunit. Forms a tight complex with proteins S10 and S14.</text>
</comment>
<comment type="similarity">
    <text evidence="1">Belongs to the universal ribosomal protein uS3 family.</text>
</comment>
<gene>
    <name evidence="1" type="primary">rpsC</name>
    <name type="ordered locus">Fjoh_0391</name>
</gene>
<proteinExistence type="inferred from homology"/>
<protein>
    <recommendedName>
        <fullName evidence="1">Small ribosomal subunit protein uS3</fullName>
    </recommendedName>
    <alternativeName>
        <fullName evidence="3">30S ribosomal protein S3</fullName>
    </alternativeName>
</protein>
<organism>
    <name type="scientific">Flavobacterium johnsoniae (strain ATCC 17061 / DSM 2064 / JCM 8514 / BCRC 14874 / CCUG 350202 / NBRC 14942 / NCIMB 11054 / UW101)</name>
    <name type="common">Cytophaga johnsonae</name>
    <dbReference type="NCBI Taxonomy" id="376686"/>
    <lineage>
        <taxon>Bacteria</taxon>
        <taxon>Pseudomonadati</taxon>
        <taxon>Bacteroidota</taxon>
        <taxon>Flavobacteriia</taxon>
        <taxon>Flavobacteriales</taxon>
        <taxon>Flavobacteriaceae</taxon>
        <taxon>Flavobacterium</taxon>
    </lineage>
</organism>
<feature type="chain" id="PRO_1000086122" description="Small ribosomal subunit protein uS3">
    <location>
        <begin position="1"/>
        <end position="252"/>
    </location>
</feature>
<feature type="domain" description="KH type-2" evidence="1">
    <location>
        <begin position="38"/>
        <end position="106"/>
    </location>
</feature>
<feature type="region of interest" description="Disordered" evidence="2">
    <location>
        <begin position="214"/>
        <end position="252"/>
    </location>
</feature>
<feature type="compositionally biased region" description="Gly residues" evidence="2">
    <location>
        <begin position="224"/>
        <end position="233"/>
    </location>
</feature>
<accession>A5FMZ4</accession>